<protein>
    <recommendedName>
        <fullName evidence="1">Large ribosomal subunit protein bL34</fullName>
    </recommendedName>
    <alternativeName>
        <fullName evidence="2">50S ribosomal protein L34</fullName>
    </alternativeName>
</protein>
<evidence type="ECO:0000255" key="1">
    <source>
        <dbReference type="HAMAP-Rule" id="MF_00391"/>
    </source>
</evidence>
<evidence type="ECO:0000305" key="2"/>
<name>RL34_METS4</name>
<reference key="1">
    <citation type="submission" date="2008-02" db="EMBL/GenBank/DDBJ databases">
        <title>Complete sequence of chromosome of Methylobacterium sp. 4-46.</title>
        <authorList>
            <consortium name="US DOE Joint Genome Institute"/>
            <person name="Copeland A."/>
            <person name="Lucas S."/>
            <person name="Lapidus A."/>
            <person name="Glavina del Rio T."/>
            <person name="Dalin E."/>
            <person name="Tice H."/>
            <person name="Bruce D."/>
            <person name="Goodwin L."/>
            <person name="Pitluck S."/>
            <person name="Chertkov O."/>
            <person name="Brettin T."/>
            <person name="Detter J.C."/>
            <person name="Han C."/>
            <person name="Kuske C.R."/>
            <person name="Schmutz J."/>
            <person name="Larimer F."/>
            <person name="Land M."/>
            <person name="Hauser L."/>
            <person name="Kyrpides N."/>
            <person name="Ivanova N."/>
            <person name="Marx C.J."/>
            <person name="Richardson P."/>
        </authorList>
    </citation>
    <scope>NUCLEOTIDE SEQUENCE [LARGE SCALE GENOMIC DNA]</scope>
    <source>
        <strain>4-46</strain>
    </source>
</reference>
<sequence length="44" mass="5136">MKRTYQPSKLVRKRRHGFRARMATVGGRKVIAARRARGRKRLSA</sequence>
<organism>
    <name type="scientific">Methylobacterium sp. (strain 4-46)</name>
    <dbReference type="NCBI Taxonomy" id="426117"/>
    <lineage>
        <taxon>Bacteria</taxon>
        <taxon>Pseudomonadati</taxon>
        <taxon>Pseudomonadota</taxon>
        <taxon>Alphaproteobacteria</taxon>
        <taxon>Hyphomicrobiales</taxon>
        <taxon>Methylobacteriaceae</taxon>
        <taxon>Methylobacterium</taxon>
    </lineage>
</organism>
<dbReference type="EMBL" id="CP000943">
    <property type="protein sequence ID" value="ACA19405.1"/>
    <property type="molecule type" value="Genomic_DNA"/>
</dbReference>
<dbReference type="RefSeq" id="WP_010300405.1">
    <property type="nucleotide sequence ID" value="NC_010511.1"/>
</dbReference>
<dbReference type="SMR" id="B0UHH9"/>
<dbReference type="STRING" id="426117.M446_5079"/>
<dbReference type="KEGG" id="met:M446_5079"/>
<dbReference type="eggNOG" id="COG0230">
    <property type="taxonomic scope" value="Bacteria"/>
</dbReference>
<dbReference type="HOGENOM" id="CLU_129938_2_0_5"/>
<dbReference type="GO" id="GO:1990904">
    <property type="term" value="C:ribonucleoprotein complex"/>
    <property type="evidence" value="ECO:0007669"/>
    <property type="project" value="UniProtKB-KW"/>
</dbReference>
<dbReference type="GO" id="GO:0005840">
    <property type="term" value="C:ribosome"/>
    <property type="evidence" value="ECO:0007669"/>
    <property type="project" value="UniProtKB-KW"/>
</dbReference>
<dbReference type="GO" id="GO:0003735">
    <property type="term" value="F:structural constituent of ribosome"/>
    <property type="evidence" value="ECO:0007669"/>
    <property type="project" value="InterPro"/>
</dbReference>
<dbReference type="GO" id="GO:0006412">
    <property type="term" value="P:translation"/>
    <property type="evidence" value="ECO:0007669"/>
    <property type="project" value="UniProtKB-UniRule"/>
</dbReference>
<dbReference type="FunFam" id="1.10.287.3980:FF:000001">
    <property type="entry name" value="Mitochondrial ribosomal protein L34"/>
    <property type="match status" value="1"/>
</dbReference>
<dbReference type="Gene3D" id="1.10.287.3980">
    <property type="match status" value="1"/>
</dbReference>
<dbReference type="HAMAP" id="MF_00391">
    <property type="entry name" value="Ribosomal_bL34"/>
    <property type="match status" value="1"/>
</dbReference>
<dbReference type="InterPro" id="IPR000271">
    <property type="entry name" value="Ribosomal_bL34"/>
</dbReference>
<dbReference type="InterPro" id="IPR020939">
    <property type="entry name" value="Ribosomal_bL34_CS"/>
</dbReference>
<dbReference type="NCBIfam" id="TIGR01030">
    <property type="entry name" value="rpmH_bact"/>
    <property type="match status" value="1"/>
</dbReference>
<dbReference type="PANTHER" id="PTHR14503:SF4">
    <property type="entry name" value="LARGE RIBOSOMAL SUBUNIT PROTEIN BL34M"/>
    <property type="match status" value="1"/>
</dbReference>
<dbReference type="PANTHER" id="PTHR14503">
    <property type="entry name" value="MITOCHONDRIAL RIBOSOMAL PROTEIN 34 FAMILY MEMBER"/>
    <property type="match status" value="1"/>
</dbReference>
<dbReference type="Pfam" id="PF00468">
    <property type="entry name" value="Ribosomal_L34"/>
    <property type="match status" value="1"/>
</dbReference>
<dbReference type="PROSITE" id="PS00784">
    <property type="entry name" value="RIBOSOMAL_L34"/>
    <property type="match status" value="1"/>
</dbReference>
<accession>B0UHH9</accession>
<comment type="similarity">
    <text evidence="1">Belongs to the bacterial ribosomal protein bL34 family.</text>
</comment>
<gene>
    <name evidence="1" type="primary">rpmH</name>
    <name type="ordered locus">M446_5079</name>
</gene>
<feature type="chain" id="PRO_1000196069" description="Large ribosomal subunit protein bL34">
    <location>
        <begin position="1"/>
        <end position="44"/>
    </location>
</feature>
<keyword id="KW-0687">Ribonucleoprotein</keyword>
<keyword id="KW-0689">Ribosomal protein</keyword>
<proteinExistence type="inferred from homology"/>